<organism>
    <name type="scientific">Atlantic halibut nervous necrosis virus</name>
    <name type="common">AhNNV</name>
    <dbReference type="NCBI Taxonomy" id="99486"/>
    <lineage>
        <taxon>Viruses</taxon>
        <taxon>Riboviria</taxon>
        <taxon>Orthornavirae</taxon>
        <taxon>Kitrinoviricota</taxon>
        <taxon>Magsaviricetes</taxon>
        <taxon>Nodamuvirales</taxon>
        <taxon>Nodaviridae</taxon>
        <taxon>Betanodavirus</taxon>
        <taxon>Barfin flounder nervous necrosis virus</taxon>
    </lineage>
</organism>
<comment type="function">
    <text evidence="3">RNA-dependent RNA polymerase which replicates the viral genome composed of 2 RNA segments, RNA1 and RNA2.</text>
</comment>
<comment type="catalytic activity">
    <reaction evidence="1">
        <text>RNA(n) + a ribonucleoside 5'-triphosphate = RNA(n+1) + diphosphate</text>
        <dbReference type="Rhea" id="RHEA:21248"/>
        <dbReference type="Rhea" id="RHEA-COMP:14527"/>
        <dbReference type="Rhea" id="RHEA-COMP:17342"/>
        <dbReference type="ChEBI" id="CHEBI:33019"/>
        <dbReference type="ChEBI" id="CHEBI:61557"/>
        <dbReference type="ChEBI" id="CHEBI:140395"/>
        <dbReference type="EC" id="2.7.7.48"/>
    </reaction>
</comment>
<comment type="similarity">
    <text evidence="3">Belongs to the nodaviridae RNA polymerase family.</text>
</comment>
<reference key="1">
    <citation type="submission" date="2000-06" db="EMBL/GenBank/DDBJ databases">
        <title>The sequence of RNA1 from Atlantic halibut nervous necrosis virus (AHNNV).</title>
        <authorList>
            <person name="Sommerset I."/>
            <person name="Nerland A.H."/>
        </authorList>
    </citation>
    <scope>NUCLEOTIDE SEQUENCE [GENOMIC RNA]</scope>
    <source>
        <strain>AH99NorA</strain>
    </source>
</reference>
<proteinExistence type="inferred from homology"/>
<organismHost>
    <name type="scientific">Hippoglossus hippoglossus</name>
    <name type="common">Atlantic halibut</name>
    <name type="synonym">Pleuronectes hippoglossus</name>
    <dbReference type="NCBI Taxonomy" id="8267"/>
</organismHost>
<evidence type="ECO:0000255" key="1">
    <source>
        <dbReference type="PROSITE-ProRule" id="PRU00539"/>
    </source>
</evidence>
<evidence type="ECO:0000256" key="2">
    <source>
        <dbReference type="SAM" id="MobiDB-lite"/>
    </source>
</evidence>
<evidence type="ECO:0000305" key="3"/>
<feature type="chain" id="PRO_0000222443" description="RNA-directed RNA polymerase">
    <location>
        <begin position="1"/>
        <end position="981"/>
    </location>
</feature>
<feature type="domain" description="RdRp catalytic" evidence="1">
    <location>
        <begin position="579"/>
        <end position="701"/>
    </location>
</feature>
<feature type="region of interest" description="Disordered" evidence="2">
    <location>
        <begin position="879"/>
        <end position="981"/>
    </location>
</feature>
<feature type="compositionally biased region" description="Polar residues" evidence="2">
    <location>
        <begin position="883"/>
        <end position="898"/>
    </location>
</feature>
<feature type="compositionally biased region" description="Basic and acidic residues" evidence="2">
    <location>
        <begin position="915"/>
        <end position="936"/>
    </location>
</feature>
<feature type="compositionally biased region" description="Basic residues" evidence="2">
    <location>
        <begin position="972"/>
        <end position="981"/>
    </location>
</feature>
<keyword id="KW-0547">Nucleotide-binding</keyword>
<keyword id="KW-0548">Nucleotidyltransferase</keyword>
<keyword id="KW-0696">RNA-directed RNA polymerase</keyword>
<keyword id="KW-0808">Transferase</keyword>
<keyword id="KW-0693">Viral RNA replication</keyword>
<sequence length="981" mass="110328">MRSYEFHLARMSGATLCVVTGYRLLTSKWLADRIEDYRQRVIADRKKIIRDAAMIRTSVQKQMELVRISVRKGHSHQEAATERNSATETMLSVVEKSGYEPYIISPSPREAEYHGSRQFYSLADFRQDYRRDEITDRHIIVMTDVDYYVDMNELIGLGVPVLMYTFQPSTVSGEVKDGYFTITDDSVHYRVAGGKDVRHRIWNYNQDTMYTVSRPTGFWENLKRILRDITGITALCGFLYNKLGMAPFGDPVTMFTVDQFKMGEHRNIVSIVPFATCRSNLLKISEYGAELEYMRYQQRNNIANFNAVTYISEEGPLISLGLEGNFASVQLPLQDFENVRTAYELSKTNNLSDTVRRSGRPCKEAAIIHKCLQAECVLASEVVHKPGDLARHYQAVGSLYDVDPAEQGKCYAREYAPGPLTQTAVFPNESRSNERATIDGRIAGPQAKAKSREHITPRMRKVARDFVRHLVPEAGLGRPYPLTYVEEQQSKPLQRARNDANRYHDEFTMIVKAFQKKEAYNAPNYPRNISTVPHNQNVKLSSYTYAFKASTLQHVPWYMPTHTPAEIADAVQNLAASTTELVETDYSKFDGTFLRFMRECVEFAIYKRWVHLDHLAELSQLLANELQAPAVTRLGLKYDPDCSRLSGSALTTDGNSIANAFVSYLANRLAGMDDDEAWSWIGIVYGDDGLRSGNVSDTLLTDTASSLGFDLKIVNRAPRGSPVTFLARVYLDPWSSPASVQSPFRTLLKLHTTCDTQSEIEDIGWAKTQAYLVTDCKTPFIGHWCRAYQRNCTARVVQYADYNDIPFWVKNDDHLGNSWPQSDSVDWNDVVANELGLTTAELLKHIALLEAYTGPTSGLPRLTTSIDLEPKMSVALDGEVQAGPSQQQTDKDGTNPTGDRSAPRRARTALPGVDGHTRCTRRSDRGPGERDANVRDKRPRRSMPPSRSVSSVPPPSSSGGGADGDRVEGAARPRRQRRTPV</sequence>
<accession>Q9DIC5</accession>
<dbReference type="EC" id="2.7.7.48"/>
<dbReference type="EMBL" id="AJ401165">
    <property type="protein sequence ID" value="CAC17792.1"/>
    <property type="molecule type" value="Genomic_RNA"/>
</dbReference>
<dbReference type="Proteomes" id="UP000272105">
    <property type="component" value="Segment"/>
</dbReference>
<dbReference type="GO" id="GO:0000166">
    <property type="term" value="F:nucleotide binding"/>
    <property type="evidence" value="ECO:0007669"/>
    <property type="project" value="UniProtKB-KW"/>
</dbReference>
<dbReference type="GO" id="GO:0003723">
    <property type="term" value="F:RNA binding"/>
    <property type="evidence" value="ECO:0007669"/>
    <property type="project" value="InterPro"/>
</dbReference>
<dbReference type="GO" id="GO:0003968">
    <property type="term" value="F:RNA-directed RNA polymerase activity"/>
    <property type="evidence" value="ECO:0007669"/>
    <property type="project" value="UniProtKB-KW"/>
</dbReference>
<dbReference type="GO" id="GO:0006351">
    <property type="term" value="P:DNA-templated transcription"/>
    <property type="evidence" value="ECO:0007669"/>
    <property type="project" value="InterPro"/>
</dbReference>
<dbReference type="GO" id="GO:0039694">
    <property type="term" value="P:viral RNA genome replication"/>
    <property type="evidence" value="ECO:0007669"/>
    <property type="project" value="InterPro"/>
</dbReference>
<dbReference type="CDD" id="cd23173">
    <property type="entry name" value="ps-ssRNAv_Nodaviridae_RdRp"/>
    <property type="match status" value="1"/>
</dbReference>
<dbReference type="InterPro" id="IPR043502">
    <property type="entry name" value="DNA/RNA_pol_sf"/>
</dbReference>
<dbReference type="InterPro" id="IPR043647">
    <property type="entry name" value="Noda_Vmethyltr_dom"/>
</dbReference>
<dbReference type="InterPro" id="IPR001205">
    <property type="entry name" value="RNA-dir_pol_C"/>
</dbReference>
<dbReference type="InterPro" id="IPR007094">
    <property type="entry name" value="RNA-dir_pol_PSvirus"/>
</dbReference>
<dbReference type="Pfam" id="PF19222">
    <property type="entry name" value="Noda_Vmethyltr"/>
    <property type="match status" value="1"/>
</dbReference>
<dbReference type="Pfam" id="PF00680">
    <property type="entry name" value="RdRP_1"/>
    <property type="match status" value="1"/>
</dbReference>
<dbReference type="SUPFAM" id="SSF56672">
    <property type="entry name" value="DNA/RNA polymerases"/>
    <property type="match status" value="1"/>
</dbReference>
<dbReference type="PROSITE" id="PS50507">
    <property type="entry name" value="RDRP_SSRNA_POS"/>
    <property type="match status" value="1"/>
</dbReference>
<name>RDRP_AHNNV</name>
<protein>
    <recommendedName>
        <fullName>RNA-directed RNA polymerase</fullName>
        <shortName>RdRp</shortName>
        <ecNumber>2.7.7.48</ecNumber>
    </recommendedName>
    <alternativeName>
        <fullName>RNA replicase</fullName>
        <shortName>Protein A</shortName>
    </alternativeName>
</protein>